<feature type="signal peptide" evidence="2">
    <location>
        <begin position="1"/>
        <end position="26"/>
    </location>
</feature>
<feature type="chain" id="PRO_0000006573" description="Cytochrome c55X">
    <location>
        <begin position="27"/>
        <end position="113"/>
    </location>
</feature>
<feature type="binding site" description="covalent" evidence="3">
    <location>
        <position position="45"/>
    </location>
    <ligand>
        <name>heme c</name>
        <dbReference type="ChEBI" id="CHEBI:61717"/>
    </ligand>
</feature>
<feature type="binding site" description="covalent" evidence="3">
    <location>
        <position position="48"/>
    </location>
    <ligand>
        <name>heme c</name>
        <dbReference type="ChEBI" id="CHEBI:61717"/>
    </ligand>
</feature>
<feature type="binding site" description="axial binding residue" evidence="3">
    <location>
        <position position="49"/>
    </location>
    <ligand>
        <name>heme c</name>
        <dbReference type="ChEBI" id="CHEBI:61717"/>
    </ligand>
    <ligandPart>
        <name>Fe</name>
        <dbReference type="ChEBI" id="CHEBI:18248"/>
    </ligandPart>
</feature>
<proteinExistence type="inferred from homology"/>
<evidence type="ECO:0000250" key="1"/>
<evidence type="ECO:0000255" key="2"/>
<evidence type="ECO:0000255" key="3">
    <source>
        <dbReference type="PROSITE-ProRule" id="PRU00433"/>
    </source>
</evidence>
<dbReference type="EMBL" id="X53676">
    <property type="protein sequence ID" value="CAA40154.1"/>
    <property type="molecule type" value="Genomic_DNA"/>
</dbReference>
<dbReference type="PIR" id="S13940">
    <property type="entry name" value="CCPSS"/>
</dbReference>
<dbReference type="RefSeq" id="WP_003279938.1">
    <property type="nucleotide sequence ID" value="NZ_CP036186.1"/>
</dbReference>
<dbReference type="SMR" id="P24039"/>
<dbReference type="eggNOG" id="COG2010">
    <property type="taxonomic scope" value="Bacteria"/>
</dbReference>
<dbReference type="GO" id="GO:0042597">
    <property type="term" value="C:periplasmic space"/>
    <property type="evidence" value="ECO:0007669"/>
    <property type="project" value="UniProtKB-SubCell"/>
</dbReference>
<dbReference type="GO" id="GO:0009055">
    <property type="term" value="F:electron transfer activity"/>
    <property type="evidence" value="ECO:0007669"/>
    <property type="project" value="InterPro"/>
</dbReference>
<dbReference type="GO" id="GO:0020037">
    <property type="term" value="F:heme binding"/>
    <property type="evidence" value="ECO:0007669"/>
    <property type="project" value="InterPro"/>
</dbReference>
<dbReference type="GO" id="GO:0046872">
    <property type="term" value="F:metal ion binding"/>
    <property type="evidence" value="ECO:0007669"/>
    <property type="project" value="UniProtKB-KW"/>
</dbReference>
<dbReference type="Gene3D" id="1.10.760.10">
    <property type="entry name" value="Cytochrome c-like domain"/>
    <property type="match status" value="1"/>
</dbReference>
<dbReference type="InterPro" id="IPR009056">
    <property type="entry name" value="Cyt_c-like_dom"/>
</dbReference>
<dbReference type="InterPro" id="IPR036909">
    <property type="entry name" value="Cyt_c-like_dom_sf"/>
</dbReference>
<dbReference type="Pfam" id="PF13442">
    <property type="entry name" value="Cytochrome_CBB3"/>
    <property type="match status" value="1"/>
</dbReference>
<dbReference type="SUPFAM" id="SSF46626">
    <property type="entry name" value="Cytochrome c"/>
    <property type="match status" value="1"/>
</dbReference>
<dbReference type="PROSITE" id="PS51007">
    <property type="entry name" value="CYTC"/>
    <property type="match status" value="1"/>
</dbReference>
<keyword id="KW-0249">Electron transport</keyword>
<keyword id="KW-0349">Heme</keyword>
<keyword id="KW-0408">Iron</keyword>
<keyword id="KW-0479">Metal-binding</keyword>
<keyword id="KW-0574">Periplasm</keyword>
<keyword id="KW-0732">Signal</keyword>
<keyword id="KW-0813">Transport</keyword>
<sequence>MTVARHAVSRLGLALASFLLFPLALAAAPAAERQATLDHLLLQDCGSCHGLRMTGGLGPALTREALAGKPRDSLIATVTHGRPGTAMPGWNALLDEQDIAYLVDRLLEGYPKP</sequence>
<accession>P24039</accession>
<protein>
    <recommendedName>
        <fullName>Cytochrome c55X</fullName>
    </recommendedName>
</protein>
<organism>
    <name type="scientific">Stutzerimonas stutzeri</name>
    <name type="common">Pseudomonas stutzeri</name>
    <dbReference type="NCBI Taxonomy" id="316"/>
    <lineage>
        <taxon>Bacteria</taxon>
        <taxon>Pseudomonadati</taxon>
        <taxon>Pseudomonadota</taxon>
        <taxon>Gammaproteobacteria</taxon>
        <taxon>Pseudomonadales</taxon>
        <taxon>Pseudomonadaceae</taxon>
        <taxon>Stutzerimonas</taxon>
    </lineage>
</organism>
<reference key="1">
    <citation type="journal article" date="1991" name="FEBS Lett.">
        <title>The nirSTBM region coding for cytochrome cd1-dependent nitrite respiration of Pseudomonas stutzeri consists of a cluster of mono-, di-, and tetraheme proteins.</title>
        <authorList>
            <person name="Juengst A."/>
            <person name="Wakabayashi S."/>
            <person name="Matsubara H."/>
            <person name="Zumft W.G."/>
        </authorList>
    </citation>
    <scope>NUCLEOTIDE SEQUENCE [GENOMIC DNA]</scope>
    <source>
        <strain>ATCC 14405 / JCM 20778 / CIP 107696 / IAM 12931 / LMG 2243 / NCIMB 568 / Baumann 218 / ZoBell 632</strain>
    </source>
</reference>
<reference key="2">
    <citation type="journal article" date="1995" name="Eur. J. Biochem.">
        <title>Resolution of the nirD locus for heme d1 synthesis of cytochrome cd1 (respiratory nitrite reductase) from Pseudomonas stutzeri.</title>
        <authorList>
            <person name="Palmedo G."/>
            <person name="Seither P."/>
            <person name="Koerner H."/>
            <person name="Matthews J.C."/>
            <person name="Burkhalter R.S."/>
            <person name="Timkovich R."/>
            <person name="Zumft W.G."/>
        </authorList>
    </citation>
    <scope>NUCLEOTIDE SEQUENCE [GENOMIC DNA] OF 103-113</scope>
</reference>
<gene>
    <name type="primary">nirC</name>
</gene>
<name>NIRC_STUST</name>
<comment type="function">
    <text evidence="1">Monoheme c-type cytochrome.</text>
</comment>
<comment type="subcellular location">
    <subcellularLocation>
        <location evidence="1">Periplasm</location>
    </subcellularLocation>
</comment>
<comment type="PTM">
    <text>Binds 1 heme c group covalently per subunit.</text>
</comment>